<evidence type="ECO:0000255" key="1">
    <source>
        <dbReference type="HAMAP-Rule" id="MF_00375"/>
    </source>
</evidence>
<keyword id="KW-0963">Cytoplasm</keyword>
<keyword id="KW-0413">Isomerase</keyword>
<keyword id="KW-0627">Porphyrin biosynthesis</keyword>
<keyword id="KW-0663">Pyridoxal phosphate</keyword>
<sequence>MPIIEESTMTYAEACRYFPGGVNSPIRACIPVGILPPIVSSAHRDIFIDSFGKTFIDFCGSWGSLIHGHGHPKILDVICNSASQGTSYGLTSENEISLAATLFSCLEFEDHKVRFVSSGTEATMTAVRLACATTGRSIMIKFLGCYHGHADVLLKGISIDESNIHQVPHIVDTYFSGNPYLPLNLILPYNDIQIFKEVMLQVGERVACVIFEPIAINMGVVLPKPGFIEGVITISRRFAALTIMDEVVTGFRMGIRGVRSIMDVDSDITVYGKILGGGMPVAAFLAHHRIMDHLLPLGQVFQAGTLSGNPIAMAVGKASLELCREVDFYPKLENLAQSFFAPIEEVICHQGFPVSLVRAGSMFSFFFRETPPTNLREVQECDHQMFGVFYRHVFAQGVYLSPAPMEASFLSSVHSKENLAYTQNVLIDSLMKTFGSL</sequence>
<organism>
    <name type="scientific">Chlamydia abortus (strain DSM 27085 / S26/3)</name>
    <name type="common">Chlamydophila abortus</name>
    <dbReference type="NCBI Taxonomy" id="218497"/>
    <lineage>
        <taxon>Bacteria</taxon>
        <taxon>Pseudomonadati</taxon>
        <taxon>Chlamydiota</taxon>
        <taxon>Chlamydiia</taxon>
        <taxon>Chlamydiales</taxon>
        <taxon>Chlamydiaceae</taxon>
        <taxon>Chlamydia/Chlamydophila group</taxon>
        <taxon>Chlamydia</taxon>
    </lineage>
</organism>
<feature type="chain" id="PRO_0000382291" description="Glutamate-1-semialdehyde 2,1-aminomutase">
    <location>
        <begin position="1"/>
        <end position="437"/>
    </location>
</feature>
<feature type="modified residue" description="N6-(pyridoxal phosphate)lysine" evidence="1">
    <location>
        <position position="273"/>
    </location>
</feature>
<dbReference type="EC" id="5.4.3.8" evidence="1"/>
<dbReference type="EMBL" id="CR848038">
    <property type="protein sequence ID" value="CAH64050.1"/>
    <property type="molecule type" value="Genomic_DNA"/>
</dbReference>
<dbReference type="RefSeq" id="WP_011097196.1">
    <property type="nucleotide sequence ID" value="NC_004552.2"/>
</dbReference>
<dbReference type="SMR" id="Q5L5P0"/>
<dbReference type="KEGG" id="cab:CAB603"/>
<dbReference type="eggNOG" id="COG0001">
    <property type="taxonomic scope" value="Bacteria"/>
</dbReference>
<dbReference type="HOGENOM" id="CLU_016922_1_5_0"/>
<dbReference type="OrthoDB" id="9807885at2"/>
<dbReference type="UniPathway" id="UPA00251">
    <property type="reaction ID" value="UER00317"/>
</dbReference>
<dbReference type="Proteomes" id="UP000001012">
    <property type="component" value="Chromosome"/>
</dbReference>
<dbReference type="GO" id="GO:0005737">
    <property type="term" value="C:cytoplasm"/>
    <property type="evidence" value="ECO:0007669"/>
    <property type="project" value="UniProtKB-SubCell"/>
</dbReference>
<dbReference type="GO" id="GO:0042286">
    <property type="term" value="F:glutamate-1-semialdehyde 2,1-aminomutase activity"/>
    <property type="evidence" value="ECO:0007669"/>
    <property type="project" value="UniProtKB-UniRule"/>
</dbReference>
<dbReference type="GO" id="GO:0030170">
    <property type="term" value="F:pyridoxal phosphate binding"/>
    <property type="evidence" value="ECO:0007669"/>
    <property type="project" value="InterPro"/>
</dbReference>
<dbReference type="GO" id="GO:0008483">
    <property type="term" value="F:transaminase activity"/>
    <property type="evidence" value="ECO:0007669"/>
    <property type="project" value="InterPro"/>
</dbReference>
<dbReference type="GO" id="GO:0006782">
    <property type="term" value="P:protoporphyrinogen IX biosynthetic process"/>
    <property type="evidence" value="ECO:0007669"/>
    <property type="project" value="UniProtKB-UniRule"/>
</dbReference>
<dbReference type="CDD" id="cd00610">
    <property type="entry name" value="OAT_like"/>
    <property type="match status" value="1"/>
</dbReference>
<dbReference type="Gene3D" id="3.90.1150.10">
    <property type="entry name" value="Aspartate Aminotransferase, domain 1"/>
    <property type="match status" value="1"/>
</dbReference>
<dbReference type="Gene3D" id="3.40.640.10">
    <property type="entry name" value="Type I PLP-dependent aspartate aminotransferase-like (Major domain)"/>
    <property type="match status" value="1"/>
</dbReference>
<dbReference type="HAMAP" id="MF_00375">
    <property type="entry name" value="HemL_aminotrans_3"/>
    <property type="match status" value="1"/>
</dbReference>
<dbReference type="InterPro" id="IPR004639">
    <property type="entry name" value="4pyrrol_synth_GluAld_NH2Trfase"/>
</dbReference>
<dbReference type="InterPro" id="IPR005814">
    <property type="entry name" value="Aminotrans_3"/>
</dbReference>
<dbReference type="InterPro" id="IPR015424">
    <property type="entry name" value="PyrdxlP-dep_Trfase"/>
</dbReference>
<dbReference type="InterPro" id="IPR015421">
    <property type="entry name" value="PyrdxlP-dep_Trfase_major"/>
</dbReference>
<dbReference type="InterPro" id="IPR015422">
    <property type="entry name" value="PyrdxlP-dep_Trfase_small"/>
</dbReference>
<dbReference type="NCBIfam" id="NF000818">
    <property type="entry name" value="PRK00062.1"/>
    <property type="match status" value="1"/>
</dbReference>
<dbReference type="NCBIfam" id="NF001864">
    <property type="entry name" value="PRK00615.1"/>
    <property type="match status" value="1"/>
</dbReference>
<dbReference type="PANTHER" id="PTHR43713">
    <property type="entry name" value="GLUTAMATE-1-SEMIALDEHYDE 2,1-AMINOMUTASE"/>
    <property type="match status" value="1"/>
</dbReference>
<dbReference type="PANTHER" id="PTHR43713:SF3">
    <property type="entry name" value="GLUTAMATE-1-SEMIALDEHYDE 2,1-AMINOMUTASE 1, CHLOROPLASTIC-RELATED"/>
    <property type="match status" value="1"/>
</dbReference>
<dbReference type="Pfam" id="PF00202">
    <property type="entry name" value="Aminotran_3"/>
    <property type="match status" value="1"/>
</dbReference>
<dbReference type="SUPFAM" id="SSF53383">
    <property type="entry name" value="PLP-dependent transferases"/>
    <property type="match status" value="1"/>
</dbReference>
<comment type="catalytic activity">
    <reaction evidence="1">
        <text>(S)-4-amino-5-oxopentanoate = 5-aminolevulinate</text>
        <dbReference type="Rhea" id="RHEA:14265"/>
        <dbReference type="ChEBI" id="CHEBI:57501"/>
        <dbReference type="ChEBI" id="CHEBI:356416"/>
        <dbReference type="EC" id="5.4.3.8"/>
    </reaction>
</comment>
<comment type="cofactor">
    <cofactor evidence="1">
        <name>pyridoxal 5'-phosphate</name>
        <dbReference type="ChEBI" id="CHEBI:597326"/>
    </cofactor>
</comment>
<comment type="pathway">
    <text evidence="1">Porphyrin-containing compound metabolism; protoporphyrin-IX biosynthesis; 5-aminolevulinate from L-glutamyl-tRNA(Glu): step 2/2.</text>
</comment>
<comment type="subunit">
    <text evidence="1">Homodimer.</text>
</comment>
<comment type="subcellular location">
    <subcellularLocation>
        <location evidence="1">Cytoplasm</location>
    </subcellularLocation>
</comment>
<comment type="similarity">
    <text evidence="1">Belongs to the class-III pyridoxal-phosphate-dependent aminotransferase family. HemL subfamily.</text>
</comment>
<accession>Q5L5P0</accession>
<proteinExistence type="inferred from homology"/>
<reference key="1">
    <citation type="journal article" date="2005" name="Genome Res.">
        <title>The Chlamydophila abortus genome sequence reveals an array of variable proteins that contribute to interspecies variation.</title>
        <authorList>
            <person name="Thomson N.R."/>
            <person name="Yeats C."/>
            <person name="Bell K."/>
            <person name="Holden M.T.G."/>
            <person name="Bentley S.D."/>
            <person name="Livingstone M."/>
            <person name="Cerdeno-Tarraga A.-M."/>
            <person name="Harris B."/>
            <person name="Doggett J."/>
            <person name="Ormond D."/>
            <person name="Mungall K."/>
            <person name="Clarke K."/>
            <person name="Feltwell T."/>
            <person name="Hance Z."/>
            <person name="Sanders M."/>
            <person name="Quail M.A."/>
            <person name="Price C."/>
            <person name="Barrell B.G."/>
            <person name="Parkhill J."/>
            <person name="Longbottom D."/>
        </authorList>
    </citation>
    <scope>NUCLEOTIDE SEQUENCE [LARGE SCALE GENOMIC DNA]</scope>
    <source>
        <strain>DSM 27085 / S26/3</strain>
    </source>
</reference>
<protein>
    <recommendedName>
        <fullName evidence="1">Glutamate-1-semialdehyde 2,1-aminomutase</fullName>
        <shortName evidence="1">GSA</shortName>
        <ecNumber evidence="1">5.4.3.8</ecNumber>
    </recommendedName>
    <alternativeName>
        <fullName evidence="1">Glutamate-1-semialdehyde aminotransferase</fullName>
        <shortName evidence="1">GSA-AT</shortName>
    </alternativeName>
</protein>
<gene>
    <name evidence="1" type="primary">hemL</name>
    <name type="ordered locus">CAB603</name>
</gene>
<name>GSA_CHLAB</name>